<name>NU6M_CERCA</name>
<protein>
    <recommendedName>
        <fullName>NADH-ubiquinone oxidoreductase chain 6</fullName>
        <ecNumber>7.1.1.2</ecNumber>
    </recommendedName>
    <alternativeName>
        <fullName>NADH dehydrogenase subunit 6</fullName>
    </alternativeName>
</protein>
<keyword id="KW-0249">Electron transport</keyword>
<keyword id="KW-0472">Membrane</keyword>
<keyword id="KW-0496">Mitochondrion</keyword>
<keyword id="KW-0520">NAD</keyword>
<keyword id="KW-0679">Respiratory chain</keyword>
<keyword id="KW-1278">Translocase</keyword>
<keyword id="KW-0812">Transmembrane</keyword>
<keyword id="KW-1133">Transmembrane helix</keyword>
<keyword id="KW-0813">Transport</keyword>
<keyword id="KW-0830">Ubiquinone</keyword>
<evidence type="ECO:0000250" key="1"/>
<evidence type="ECO:0000255" key="2"/>
<evidence type="ECO:0000305" key="3"/>
<sequence length="174" mass="20108">MMQLMLYASTLITSIILFKMNHPLAMGLMLLIQTIQISMLTGLMAKSFWFSYILFLIFLGGMLVLFIYVTSLASNEMFSLSMKLTTISLFIFSMILIINILLDKSSISFFIQNNEMQSIYNLNMFLQENSLNLQKLYNYPTNLMTILLMNYLLITLIAVVKITKLFYGPLRPMN</sequence>
<dbReference type="EC" id="7.1.1.2"/>
<dbReference type="EMBL" id="U12925">
    <property type="protein sequence ID" value="AAA85799.1"/>
    <property type="molecule type" value="Genomic_DNA"/>
</dbReference>
<dbReference type="SMR" id="Q34050"/>
<dbReference type="OrthoDB" id="6592556at2759"/>
<dbReference type="GO" id="GO:0031966">
    <property type="term" value="C:mitochondrial membrane"/>
    <property type="evidence" value="ECO:0007669"/>
    <property type="project" value="UniProtKB-SubCell"/>
</dbReference>
<dbReference type="GO" id="GO:0008137">
    <property type="term" value="F:NADH dehydrogenase (ubiquinone) activity"/>
    <property type="evidence" value="ECO:0007669"/>
    <property type="project" value="UniProtKB-EC"/>
</dbReference>
<dbReference type="InterPro" id="IPR050269">
    <property type="entry name" value="ComplexI_Subunit6"/>
</dbReference>
<dbReference type="InterPro" id="IPR001457">
    <property type="entry name" value="NADH_UbQ/plastoQ_OxRdtase_su6"/>
</dbReference>
<dbReference type="PANTHER" id="PTHR11435">
    <property type="entry name" value="NADH UBIQUINONE OXIDOREDUCTASE SUBUNIT ND6"/>
    <property type="match status" value="1"/>
</dbReference>
<dbReference type="PANTHER" id="PTHR11435:SF1">
    <property type="entry name" value="NADH-UBIQUINONE OXIDOREDUCTASE CHAIN 6"/>
    <property type="match status" value="1"/>
</dbReference>
<dbReference type="Pfam" id="PF00499">
    <property type="entry name" value="Oxidored_q3"/>
    <property type="match status" value="1"/>
</dbReference>
<organism>
    <name type="scientific">Ceratitis capitata</name>
    <name type="common">Mediterranean fruit fly</name>
    <name type="synonym">Tephritis capitata</name>
    <dbReference type="NCBI Taxonomy" id="7213"/>
    <lineage>
        <taxon>Eukaryota</taxon>
        <taxon>Metazoa</taxon>
        <taxon>Ecdysozoa</taxon>
        <taxon>Arthropoda</taxon>
        <taxon>Hexapoda</taxon>
        <taxon>Insecta</taxon>
        <taxon>Pterygota</taxon>
        <taxon>Neoptera</taxon>
        <taxon>Endopterygota</taxon>
        <taxon>Diptera</taxon>
        <taxon>Brachycera</taxon>
        <taxon>Muscomorpha</taxon>
        <taxon>Tephritoidea</taxon>
        <taxon>Tephritidae</taxon>
        <taxon>Ceratitis</taxon>
        <taxon>Ceratitis</taxon>
    </lineage>
</organism>
<accession>Q34050</accession>
<reference key="1">
    <citation type="journal article" date="1995" name="Insect Mol. Biol.">
        <title>Analysis of mitochondrial DNA and development of PCR-based diagnostic molecular markers for Mediterranean fruit fly (Ceratitis capitata) populations.</title>
        <authorList>
            <person name="Gasparich G.E."/>
            <person name="Sheppard W.S."/>
            <person name="Han H.Y."/>
            <person name="McPheron B.A."/>
            <person name="Steck G.J."/>
        </authorList>
    </citation>
    <scope>NUCLEOTIDE SEQUENCE [GENOMIC DNA]</scope>
    <source>
        <strain>Guatemala laboratory colony</strain>
    </source>
</reference>
<feature type="chain" id="PRO_0000118264" description="NADH-ubiquinone oxidoreductase chain 6">
    <location>
        <begin position="1"/>
        <end position="174"/>
    </location>
</feature>
<feature type="transmembrane region" description="Helical" evidence="2">
    <location>
        <begin position="24"/>
        <end position="44"/>
    </location>
</feature>
<feature type="transmembrane region" description="Helical" evidence="2">
    <location>
        <begin position="48"/>
        <end position="68"/>
    </location>
</feature>
<feature type="transmembrane region" description="Helical" evidence="2">
    <location>
        <begin position="82"/>
        <end position="102"/>
    </location>
</feature>
<feature type="transmembrane region" description="Helical" evidence="2">
    <location>
        <begin position="143"/>
        <end position="163"/>
    </location>
</feature>
<comment type="function">
    <text evidence="1">Core subunit of the mitochondrial membrane respiratory chain NADH dehydrogenase (Complex I) that is believed to belong to the minimal assembly required for catalysis. Complex I functions in the transfer of electrons from NADH to the respiratory chain. The immediate electron acceptor for the enzyme is believed to be ubiquinone (By similarity).</text>
</comment>
<comment type="catalytic activity">
    <reaction>
        <text>a ubiquinone + NADH + 5 H(+)(in) = a ubiquinol + NAD(+) + 4 H(+)(out)</text>
        <dbReference type="Rhea" id="RHEA:29091"/>
        <dbReference type="Rhea" id="RHEA-COMP:9565"/>
        <dbReference type="Rhea" id="RHEA-COMP:9566"/>
        <dbReference type="ChEBI" id="CHEBI:15378"/>
        <dbReference type="ChEBI" id="CHEBI:16389"/>
        <dbReference type="ChEBI" id="CHEBI:17976"/>
        <dbReference type="ChEBI" id="CHEBI:57540"/>
        <dbReference type="ChEBI" id="CHEBI:57945"/>
        <dbReference type="EC" id="7.1.1.2"/>
    </reaction>
</comment>
<comment type="subcellular location">
    <subcellularLocation>
        <location evidence="3">Mitochondrion membrane</location>
        <topology evidence="3">Multi-pass membrane protein</topology>
    </subcellularLocation>
</comment>
<comment type="similarity">
    <text evidence="3">Belongs to the complex I subunit 6 family.</text>
</comment>
<geneLocation type="mitochondrion"/>
<proteinExistence type="inferred from homology"/>
<gene>
    <name type="primary">ND6</name>
</gene>